<proteinExistence type="inferred from homology"/>
<feature type="chain" id="PRO_1000058457" description="Glycerol kinase">
    <location>
        <begin position="1"/>
        <end position="499"/>
    </location>
</feature>
<feature type="binding site" evidence="1">
    <location>
        <position position="13"/>
    </location>
    <ligand>
        <name>ADP</name>
        <dbReference type="ChEBI" id="CHEBI:456216"/>
    </ligand>
</feature>
<feature type="binding site" evidence="1">
    <location>
        <position position="13"/>
    </location>
    <ligand>
        <name>ATP</name>
        <dbReference type="ChEBI" id="CHEBI:30616"/>
    </ligand>
</feature>
<feature type="binding site" evidence="1">
    <location>
        <position position="13"/>
    </location>
    <ligand>
        <name>sn-glycerol 3-phosphate</name>
        <dbReference type="ChEBI" id="CHEBI:57597"/>
    </ligand>
</feature>
<feature type="binding site" evidence="1">
    <location>
        <position position="14"/>
    </location>
    <ligand>
        <name>ATP</name>
        <dbReference type="ChEBI" id="CHEBI:30616"/>
    </ligand>
</feature>
<feature type="binding site" evidence="1">
    <location>
        <position position="15"/>
    </location>
    <ligand>
        <name>ATP</name>
        <dbReference type="ChEBI" id="CHEBI:30616"/>
    </ligand>
</feature>
<feature type="binding site" evidence="1">
    <location>
        <position position="17"/>
    </location>
    <ligand>
        <name>ADP</name>
        <dbReference type="ChEBI" id="CHEBI:456216"/>
    </ligand>
</feature>
<feature type="binding site" evidence="1">
    <location>
        <position position="83"/>
    </location>
    <ligand>
        <name>glycerol</name>
        <dbReference type="ChEBI" id="CHEBI:17754"/>
    </ligand>
</feature>
<feature type="binding site" evidence="1">
    <location>
        <position position="83"/>
    </location>
    <ligand>
        <name>sn-glycerol 3-phosphate</name>
        <dbReference type="ChEBI" id="CHEBI:57597"/>
    </ligand>
</feature>
<feature type="binding site" evidence="1">
    <location>
        <position position="84"/>
    </location>
    <ligand>
        <name>glycerol</name>
        <dbReference type="ChEBI" id="CHEBI:17754"/>
    </ligand>
</feature>
<feature type="binding site" evidence="1">
    <location>
        <position position="84"/>
    </location>
    <ligand>
        <name>sn-glycerol 3-phosphate</name>
        <dbReference type="ChEBI" id="CHEBI:57597"/>
    </ligand>
</feature>
<feature type="binding site" evidence="1">
    <location>
        <position position="135"/>
    </location>
    <ligand>
        <name>glycerol</name>
        <dbReference type="ChEBI" id="CHEBI:17754"/>
    </ligand>
</feature>
<feature type="binding site" evidence="1">
    <location>
        <position position="135"/>
    </location>
    <ligand>
        <name>sn-glycerol 3-phosphate</name>
        <dbReference type="ChEBI" id="CHEBI:57597"/>
    </ligand>
</feature>
<feature type="binding site" evidence="1">
    <location>
        <position position="244"/>
    </location>
    <ligand>
        <name>glycerol</name>
        <dbReference type="ChEBI" id="CHEBI:17754"/>
    </ligand>
</feature>
<feature type="binding site" evidence="1">
    <location>
        <position position="244"/>
    </location>
    <ligand>
        <name>sn-glycerol 3-phosphate</name>
        <dbReference type="ChEBI" id="CHEBI:57597"/>
    </ligand>
</feature>
<feature type="binding site" evidence="1">
    <location>
        <position position="245"/>
    </location>
    <ligand>
        <name>glycerol</name>
        <dbReference type="ChEBI" id="CHEBI:17754"/>
    </ligand>
</feature>
<feature type="binding site" evidence="1">
    <location>
        <position position="266"/>
    </location>
    <ligand>
        <name>ADP</name>
        <dbReference type="ChEBI" id="CHEBI:456216"/>
    </ligand>
</feature>
<feature type="binding site" evidence="1">
    <location>
        <position position="266"/>
    </location>
    <ligand>
        <name>ATP</name>
        <dbReference type="ChEBI" id="CHEBI:30616"/>
    </ligand>
</feature>
<feature type="binding site" evidence="1">
    <location>
        <position position="310"/>
    </location>
    <ligand>
        <name>ADP</name>
        <dbReference type="ChEBI" id="CHEBI:456216"/>
    </ligand>
</feature>
<feature type="binding site" evidence="1">
    <location>
        <position position="310"/>
    </location>
    <ligand>
        <name>ATP</name>
        <dbReference type="ChEBI" id="CHEBI:30616"/>
    </ligand>
</feature>
<feature type="binding site" evidence="1">
    <location>
        <position position="314"/>
    </location>
    <ligand>
        <name>ATP</name>
        <dbReference type="ChEBI" id="CHEBI:30616"/>
    </ligand>
</feature>
<feature type="binding site" evidence="1">
    <location>
        <position position="411"/>
    </location>
    <ligand>
        <name>ADP</name>
        <dbReference type="ChEBI" id="CHEBI:456216"/>
    </ligand>
</feature>
<feature type="binding site" evidence="1">
    <location>
        <position position="411"/>
    </location>
    <ligand>
        <name>ATP</name>
        <dbReference type="ChEBI" id="CHEBI:30616"/>
    </ligand>
</feature>
<feature type="binding site" evidence="1">
    <location>
        <position position="415"/>
    </location>
    <ligand>
        <name>ADP</name>
        <dbReference type="ChEBI" id="CHEBI:456216"/>
    </ligand>
</feature>
<dbReference type="EC" id="2.7.1.30" evidence="1"/>
<dbReference type="EMBL" id="CP000812">
    <property type="protein sequence ID" value="ABV33663.1"/>
    <property type="molecule type" value="Genomic_DNA"/>
</dbReference>
<dbReference type="RefSeq" id="WP_012003144.1">
    <property type="nucleotide sequence ID" value="NZ_BSDV01000001.1"/>
</dbReference>
<dbReference type="SMR" id="A8F679"/>
<dbReference type="STRING" id="416591.Tlet_1098"/>
<dbReference type="KEGG" id="tle:Tlet_1098"/>
<dbReference type="eggNOG" id="COG0554">
    <property type="taxonomic scope" value="Bacteria"/>
</dbReference>
<dbReference type="HOGENOM" id="CLU_009281_2_3_0"/>
<dbReference type="OrthoDB" id="39631at2"/>
<dbReference type="UniPathway" id="UPA00618">
    <property type="reaction ID" value="UER00672"/>
</dbReference>
<dbReference type="Proteomes" id="UP000002016">
    <property type="component" value="Chromosome"/>
</dbReference>
<dbReference type="GO" id="GO:0005829">
    <property type="term" value="C:cytosol"/>
    <property type="evidence" value="ECO:0007669"/>
    <property type="project" value="TreeGrafter"/>
</dbReference>
<dbReference type="GO" id="GO:0005524">
    <property type="term" value="F:ATP binding"/>
    <property type="evidence" value="ECO:0007669"/>
    <property type="project" value="UniProtKB-UniRule"/>
</dbReference>
<dbReference type="GO" id="GO:0004370">
    <property type="term" value="F:glycerol kinase activity"/>
    <property type="evidence" value="ECO:0000250"/>
    <property type="project" value="UniProtKB"/>
</dbReference>
<dbReference type="GO" id="GO:0019563">
    <property type="term" value="P:glycerol catabolic process"/>
    <property type="evidence" value="ECO:0007669"/>
    <property type="project" value="UniProtKB-UniRule"/>
</dbReference>
<dbReference type="GO" id="GO:0006071">
    <property type="term" value="P:glycerol metabolic process"/>
    <property type="evidence" value="ECO:0000250"/>
    <property type="project" value="UniProtKB"/>
</dbReference>
<dbReference type="GO" id="GO:0006072">
    <property type="term" value="P:glycerol-3-phosphate metabolic process"/>
    <property type="evidence" value="ECO:0007669"/>
    <property type="project" value="InterPro"/>
</dbReference>
<dbReference type="CDD" id="cd07786">
    <property type="entry name" value="FGGY_EcGK_like"/>
    <property type="match status" value="1"/>
</dbReference>
<dbReference type="FunFam" id="3.30.420.40:FF:000007">
    <property type="entry name" value="Glycerol kinase"/>
    <property type="match status" value="1"/>
</dbReference>
<dbReference type="FunFam" id="3.30.420.40:FF:000008">
    <property type="entry name" value="Glycerol kinase"/>
    <property type="match status" value="1"/>
</dbReference>
<dbReference type="Gene3D" id="3.30.420.40">
    <property type="match status" value="2"/>
</dbReference>
<dbReference type="HAMAP" id="MF_00186">
    <property type="entry name" value="Glycerol_kin"/>
    <property type="match status" value="1"/>
</dbReference>
<dbReference type="InterPro" id="IPR043129">
    <property type="entry name" value="ATPase_NBD"/>
</dbReference>
<dbReference type="InterPro" id="IPR000577">
    <property type="entry name" value="Carb_kinase_FGGY"/>
</dbReference>
<dbReference type="InterPro" id="IPR018483">
    <property type="entry name" value="Carb_kinase_FGGY_CS"/>
</dbReference>
<dbReference type="InterPro" id="IPR018485">
    <property type="entry name" value="FGGY_C"/>
</dbReference>
<dbReference type="InterPro" id="IPR018484">
    <property type="entry name" value="FGGY_N"/>
</dbReference>
<dbReference type="InterPro" id="IPR005999">
    <property type="entry name" value="Glycerol_kin"/>
</dbReference>
<dbReference type="NCBIfam" id="TIGR01311">
    <property type="entry name" value="glycerol_kin"/>
    <property type="match status" value="1"/>
</dbReference>
<dbReference type="NCBIfam" id="NF000756">
    <property type="entry name" value="PRK00047.1"/>
    <property type="match status" value="1"/>
</dbReference>
<dbReference type="PANTHER" id="PTHR10196:SF69">
    <property type="entry name" value="GLYCEROL KINASE"/>
    <property type="match status" value="1"/>
</dbReference>
<dbReference type="PANTHER" id="PTHR10196">
    <property type="entry name" value="SUGAR KINASE"/>
    <property type="match status" value="1"/>
</dbReference>
<dbReference type="Pfam" id="PF02782">
    <property type="entry name" value="FGGY_C"/>
    <property type="match status" value="1"/>
</dbReference>
<dbReference type="Pfam" id="PF00370">
    <property type="entry name" value="FGGY_N"/>
    <property type="match status" value="1"/>
</dbReference>
<dbReference type="PIRSF" id="PIRSF000538">
    <property type="entry name" value="GlpK"/>
    <property type="match status" value="1"/>
</dbReference>
<dbReference type="SUPFAM" id="SSF53067">
    <property type="entry name" value="Actin-like ATPase domain"/>
    <property type="match status" value="2"/>
</dbReference>
<dbReference type="PROSITE" id="PS00933">
    <property type="entry name" value="FGGY_KINASES_1"/>
    <property type="match status" value="1"/>
</dbReference>
<dbReference type="PROSITE" id="PS00445">
    <property type="entry name" value="FGGY_KINASES_2"/>
    <property type="match status" value="1"/>
</dbReference>
<comment type="function">
    <text evidence="1">Key enzyme in the regulation of glycerol uptake and metabolism. Catalyzes the phosphorylation of glycerol to yield sn-glycerol 3-phosphate.</text>
</comment>
<comment type="catalytic activity">
    <reaction evidence="1">
        <text>glycerol + ATP = sn-glycerol 3-phosphate + ADP + H(+)</text>
        <dbReference type="Rhea" id="RHEA:21644"/>
        <dbReference type="ChEBI" id="CHEBI:15378"/>
        <dbReference type="ChEBI" id="CHEBI:17754"/>
        <dbReference type="ChEBI" id="CHEBI:30616"/>
        <dbReference type="ChEBI" id="CHEBI:57597"/>
        <dbReference type="ChEBI" id="CHEBI:456216"/>
        <dbReference type="EC" id="2.7.1.30"/>
    </reaction>
</comment>
<comment type="activity regulation">
    <text evidence="1">Inhibited by fructose 1,6-bisphosphate (FBP).</text>
</comment>
<comment type="pathway">
    <text evidence="1">Polyol metabolism; glycerol degradation via glycerol kinase pathway; sn-glycerol 3-phosphate from glycerol: step 1/1.</text>
</comment>
<comment type="similarity">
    <text evidence="1">Belongs to the FGGY kinase family.</text>
</comment>
<accession>A8F679</accession>
<sequence>MAEKYILALDQGTTSSRAIIFNQAGETVCMVNQEFPQLYPEPGWVEHDPVDIIESQISVAKKAIEIASINPDQIAAIGVTNQRETTIVWDKNTSKPVYNAIVWQCRRTASMCDQFKKLGYEDTIRKKTGLVLDAYFSATKLKWILDNVEGARQKAERGELLFGTVDSWLIWNLTGGKIHATDYSNASRTMLFNIHSLNWDEELLELFNIPEQMLPDVLPSSTVYGYTHKEIFGVEIPICGNAGDQQAALFGQICCEPGMVKNTYGTGCFILMNTGNKIVDSKHGLLTTIGWVLNDKSMCYALEGSVFSAGATVQWLRDGLKIVEKASDTEYLAKSVKDSAGVYFVPAFVGLGAPYWDMYARGTIIGITRGCTREHIVRAALESIAYQTRDVVEVMSEESGIKLHCLRVDGGASANDFLMQFQADILGVPVERPTVSETTALGAAYLAGLAVGYWKDHSEIKKQWRLDRRFEPQMDPETREELYKKWKNAVTRSLGWVEK</sequence>
<keyword id="KW-0067">ATP-binding</keyword>
<keyword id="KW-0319">Glycerol metabolism</keyword>
<keyword id="KW-0418">Kinase</keyword>
<keyword id="KW-0547">Nucleotide-binding</keyword>
<keyword id="KW-1185">Reference proteome</keyword>
<keyword id="KW-0808">Transferase</keyword>
<name>GLPK_PSELT</name>
<organism>
    <name type="scientific">Pseudothermotoga lettingae (strain ATCC BAA-301 / DSM 14385 / NBRC 107922 / TMO)</name>
    <name type="common">Thermotoga lettingae</name>
    <dbReference type="NCBI Taxonomy" id="416591"/>
    <lineage>
        <taxon>Bacteria</taxon>
        <taxon>Thermotogati</taxon>
        <taxon>Thermotogota</taxon>
        <taxon>Thermotogae</taxon>
        <taxon>Thermotogales</taxon>
        <taxon>Thermotogaceae</taxon>
        <taxon>Pseudothermotoga</taxon>
    </lineage>
</organism>
<protein>
    <recommendedName>
        <fullName evidence="1">Glycerol kinase</fullName>
        <ecNumber evidence="1">2.7.1.30</ecNumber>
    </recommendedName>
    <alternativeName>
        <fullName evidence="1">ATP:glycerol 3-phosphotransferase</fullName>
    </alternativeName>
    <alternativeName>
        <fullName evidence="1">Glycerokinase</fullName>
        <shortName evidence="1">GK</shortName>
    </alternativeName>
</protein>
<gene>
    <name evidence="1" type="primary">glpK</name>
    <name type="ordered locus">Tlet_1098</name>
</gene>
<evidence type="ECO:0000255" key="1">
    <source>
        <dbReference type="HAMAP-Rule" id="MF_00186"/>
    </source>
</evidence>
<reference key="1">
    <citation type="submission" date="2007-08" db="EMBL/GenBank/DDBJ databases">
        <title>Complete sequence of Thermotoga lettingae TMO.</title>
        <authorList>
            <consortium name="US DOE Joint Genome Institute"/>
            <person name="Copeland A."/>
            <person name="Lucas S."/>
            <person name="Lapidus A."/>
            <person name="Barry K."/>
            <person name="Glavina del Rio T."/>
            <person name="Dalin E."/>
            <person name="Tice H."/>
            <person name="Pitluck S."/>
            <person name="Foster B."/>
            <person name="Bruce D."/>
            <person name="Schmutz J."/>
            <person name="Larimer F."/>
            <person name="Land M."/>
            <person name="Hauser L."/>
            <person name="Kyrpides N."/>
            <person name="Mikhailova N."/>
            <person name="Nelson K."/>
            <person name="Gogarten J.P."/>
            <person name="Noll K."/>
            <person name="Richardson P."/>
        </authorList>
    </citation>
    <scope>NUCLEOTIDE SEQUENCE [LARGE SCALE GENOMIC DNA]</scope>
    <source>
        <strain>ATCC BAA-301 / DSM 14385 / NBRC 107922 / TMO</strain>
    </source>
</reference>